<comment type="similarity">
    <text evidence="1">Belongs to the bacterial ribosomal protein bL34 family.</text>
</comment>
<reference key="1">
    <citation type="journal article" date="2007" name="PLoS Biol.">
        <title>Evolution of symbiotic bacteria in the distal human intestine.</title>
        <authorList>
            <person name="Xu J."/>
            <person name="Mahowald M.A."/>
            <person name="Ley R.E."/>
            <person name="Lozupone C.A."/>
            <person name="Hamady M."/>
            <person name="Martens E.C."/>
            <person name="Henrissat B."/>
            <person name="Coutinho P.M."/>
            <person name="Minx P."/>
            <person name="Latreille P."/>
            <person name="Cordum H."/>
            <person name="Van Brunt A."/>
            <person name="Kim K."/>
            <person name="Fulton R.S."/>
            <person name="Fulton L.A."/>
            <person name="Clifton S.W."/>
            <person name="Wilson R.K."/>
            <person name="Knight R.D."/>
            <person name="Gordon J.I."/>
        </authorList>
    </citation>
    <scope>NUCLEOTIDE SEQUENCE [LARGE SCALE GENOMIC DNA]</scope>
    <source>
        <strain>ATCC 8482 / DSM 1447 / JCM 5826 / CCUG 4940 / NBRC 14291 / NCTC 11154</strain>
    </source>
</reference>
<evidence type="ECO:0000255" key="1">
    <source>
        <dbReference type="HAMAP-Rule" id="MF_00391"/>
    </source>
</evidence>
<evidence type="ECO:0000256" key="2">
    <source>
        <dbReference type="SAM" id="MobiDB-lite"/>
    </source>
</evidence>
<evidence type="ECO:0000305" key="3"/>
<dbReference type="EMBL" id="CP000139">
    <property type="protein sequence ID" value="ABR38240.1"/>
    <property type="molecule type" value="Genomic_DNA"/>
</dbReference>
<dbReference type="RefSeq" id="WP_005840676.1">
    <property type="nucleotide sequence ID" value="NZ_JANSWM010000025.1"/>
</dbReference>
<dbReference type="SMR" id="A6KXS6"/>
<dbReference type="STRING" id="435590.BVU_0530"/>
<dbReference type="PaxDb" id="435590-BVU_0530"/>
<dbReference type="GeneID" id="93448751"/>
<dbReference type="KEGG" id="bvu:BVU_0530"/>
<dbReference type="eggNOG" id="COG0230">
    <property type="taxonomic scope" value="Bacteria"/>
</dbReference>
<dbReference type="HOGENOM" id="CLU_129938_2_0_10"/>
<dbReference type="BioCyc" id="BVUL435590:G1G59-556-MONOMER"/>
<dbReference type="Proteomes" id="UP000002861">
    <property type="component" value="Chromosome"/>
</dbReference>
<dbReference type="GO" id="GO:1990904">
    <property type="term" value="C:ribonucleoprotein complex"/>
    <property type="evidence" value="ECO:0007669"/>
    <property type="project" value="UniProtKB-KW"/>
</dbReference>
<dbReference type="GO" id="GO:0005840">
    <property type="term" value="C:ribosome"/>
    <property type="evidence" value="ECO:0007669"/>
    <property type="project" value="UniProtKB-KW"/>
</dbReference>
<dbReference type="GO" id="GO:0003735">
    <property type="term" value="F:structural constituent of ribosome"/>
    <property type="evidence" value="ECO:0007669"/>
    <property type="project" value="InterPro"/>
</dbReference>
<dbReference type="GO" id="GO:0006412">
    <property type="term" value="P:translation"/>
    <property type="evidence" value="ECO:0007669"/>
    <property type="project" value="UniProtKB-UniRule"/>
</dbReference>
<dbReference type="FunFam" id="1.10.287.3980:FF:000001">
    <property type="entry name" value="Mitochondrial ribosomal protein L34"/>
    <property type="match status" value="1"/>
</dbReference>
<dbReference type="Gene3D" id="1.10.287.3980">
    <property type="match status" value="1"/>
</dbReference>
<dbReference type="HAMAP" id="MF_00391">
    <property type="entry name" value="Ribosomal_bL34"/>
    <property type="match status" value="1"/>
</dbReference>
<dbReference type="InterPro" id="IPR000271">
    <property type="entry name" value="Ribosomal_bL34"/>
</dbReference>
<dbReference type="InterPro" id="IPR020939">
    <property type="entry name" value="Ribosomal_bL34_CS"/>
</dbReference>
<dbReference type="NCBIfam" id="TIGR01030">
    <property type="entry name" value="rpmH_bact"/>
    <property type="match status" value="1"/>
</dbReference>
<dbReference type="PANTHER" id="PTHR14503:SF4">
    <property type="entry name" value="LARGE RIBOSOMAL SUBUNIT PROTEIN BL34M"/>
    <property type="match status" value="1"/>
</dbReference>
<dbReference type="PANTHER" id="PTHR14503">
    <property type="entry name" value="MITOCHONDRIAL RIBOSOMAL PROTEIN 34 FAMILY MEMBER"/>
    <property type="match status" value="1"/>
</dbReference>
<dbReference type="Pfam" id="PF00468">
    <property type="entry name" value="Ribosomal_L34"/>
    <property type="match status" value="1"/>
</dbReference>
<dbReference type="PROSITE" id="PS00784">
    <property type="entry name" value="RIBOSOMAL_L34"/>
    <property type="match status" value="1"/>
</dbReference>
<proteinExistence type="inferred from homology"/>
<accession>A6KXS6</accession>
<keyword id="KW-0687">Ribonucleoprotein</keyword>
<keyword id="KW-0689">Ribosomal protein</keyword>
<gene>
    <name evidence="1" type="primary">rpmH</name>
    <name type="ordered locus">BVU_0530</name>
</gene>
<feature type="chain" id="PRO_1000013283" description="Large ribosomal subunit protein bL34">
    <location>
        <begin position="1"/>
        <end position="51"/>
    </location>
</feature>
<feature type="region of interest" description="Disordered" evidence="2">
    <location>
        <begin position="1"/>
        <end position="51"/>
    </location>
</feature>
<feature type="compositionally biased region" description="Basic residues" evidence="2">
    <location>
        <begin position="1"/>
        <end position="16"/>
    </location>
</feature>
<feature type="compositionally biased region" description="Basic residues" evidence="2">
    <location>
        <begin position="31"/>
        <end position="42"/>
    </location>
</feature>
<protein>
    <recommendedName>
        <fullName evidence="1">Large ribosomal subunit protein bL34</fullName>
    </recommendedName>
    <alternativeName>
        <fullName evidence="3">50S ribosomal protein L34</fullName>
    </alternativeName>
</protein>
<name>RL34_PHOV8</name>
<sequence>MKRTFQPSNRKRKNKHGFRERMATANGRRVLASRRAKGRKKLTVSDEYNGK</sequence>
<organism>
    <name type="scientific">Phocaeicola vulgatus (strain ATCC 8482 / DSM 1447 / JCM 5826 / CCUG 4940 / NBRC 14291 / NCTC 11154)</name>
    <name type="common">Bacteroides vulgatus</name>
    <dbReference type="NCBI Taxonomy" id="435590"/>
    <lineage>
        <taxon>Bacteria</taxon>
        <taxon>Pseudomonadati</taxon>
        <taxon>Bacteroidota</taxon>
        <taxon>Bacteroidia</taxon>
        <taxon>Bacteroidales</taxon>
        <taxon>Bacteroidaceae</taxon>
        <taxon>Phocaeicola</taxon>
    </lineage>
</organism>